<reference key="1">
    <citation type="journal article" date="2005" name="DNA Res.">
        <title>Complete genome sequence of the facultative anaerobic magnetotactic bacterium Magnetospirillum sp. strain AMB-1.</title>
        <authorList>
            <person name="Matsunaga T."/>
            <person name="Okamura Y."/>
            <person name="Fukuda Y."/>
            <person name="Wahyudi A.T."/>
            <person name="Murase Y."/>
            <person name="Takeyama H."/>
        </authorList>
    </citation>
    <scope>NUCLEOTIDE SEQUENCE [LARGE SCALE GENOMIC DNA]</scope>
    <source>
        <strain>ATCC 700264 / AMB-1</strain>
    </source>
</reference>
<comment type="function">
    <text evidence="1">One of several proteins that assist in the late maturation steps of the functional core of the 30S ribosomal subunit. Associates with free 30S ribosomal subunits (but not with 30S subunits that are part of 70S ribosomes or polysomes). Required for efficient processing of 16S rRNA. May interact with the 5'-terminal helix region of 16S rRNA.</text>
</comment>
<comment type="subunit">
    <text evidence="1">Monomer. Binds 30S ribosomal subunits, but not 50S ribosomal subunits or 70S ribosomes.</text>
</comment>
<comment type="subcellular location">
    <subcellularLocation>
        <location evidence="1">Cytoplasm</location>
    </subcellularLocation>
</comment>
<comment type="similarity">
    <text evidence="1">Belongs to the RbfA family.</text>
</comment>
<proteinExistence type="inferred from homology"/>
<evidence type="ECO:0000255" key="1">
    <source>
        <dbReference type="HAMAP-Rule" id="MF_00003"/>
    </source>
</evidence>
<evidence type="ECO:0000256" key="2">
    <source>
        <dbReference type="SAM" id="MobiDB-lite"/>
    </source>
</evidence>
<dbReference type="EMBL" id="AP007255">
    <property type="protein sequence ID" value="BAE52874.1"/>
    <property type="molecule type" value="Genomic_DNA"/>
</dbReference>
<dbReference type="RefSeq" id="WP_011386421.1">
    <property type="nucleotide sequence ID" value="NC_007626.1"/>
</dbReference>
<dbReference type="SMR" id="Q2VZV1"/>
<dbReference type="STRING" id="342108.amb4070"/>
<dbReference type="KEGG" id="mag:amb4070"/>
<dbReference type="HOGENOM" id="CLU_089475_1_0_5"/>
<dbReference type="OrthoDB" id="9805051at2"/>
<dbReference type="Proteomes" id="UP000007058">
    <property type="component" value="Chromosome"/>
</dbReference>
<dbReference type="GO" id="GO:0005829">
    <property type="term" value="C:cytosol"/>
    <property type="evidence" value="ECO:0007669"/>
    <property type="project" value="TreeGrafter"/>
</dbReference>
<dbReference type="GO" id="GO:0043024">
    <property type="term" value="F:ribosomal small subunit binding"/>
    <property type="evidence" value="ECO:0007669"/>
    <property type="project" value="TreeGrafter"/>
</dbReference>
<dbReference type="GO" id="GO:0030490">
    <property type="term" value="P:maturation of SSU-rRNA"/>
    <property type="evidence" value="ECO:0007669"/>
    <property type="project" value="UniProtKB-UniRule"/>
</dbReference>
<dbReference type="Gene3D" id="3.30.300.20">
    <property type="match status" value="1"/>
</dbReference>
<dbReference type="HAMAP" id="MF_00003">
    <property type="entry name" value="RbfA"/>
    <property type="match status" value="1"/>
</dbReference>
<dbReference type="InterPro" id="IPR015946">
    <property type="entry name" value="KH_dom-like_a/b"/>
</dbReference>
<dbReference type="InterPro" id="IPR000238">
    <property type="entry name" value="RbfA"/>
</dbReference>
<dbReference type="InterPro" id="IPR023799">
    <property type="entry name" value="RbfA_dom_sf"/>
</dbReference>
<dbReference type="InterPro" id="IPR020053">
    <property type="entry name" value="Ribosome-bd_factorA_CS"/>
</dbReference>
<dbReference type="NCBIfam" id="NF001802">
    <property type="entry name" value="PRK00521.2-5"/>
    <property type="match status" value="1"/>
</dbReference>
<dbReference type="NCBIfam" id="TIGR00082">
    <property type="entry name" value="rbfA"/>
    <property type="match status" value="1"/>
</dbReference>
<dbReference type="PANTHER" id="PTHR33515">
    <property type="entry name" value="RIBOSOME-BINDING FACTOR A, CHLOROPLASTIC-RELATED"/>
    <property type="match status" value="1"/>
</dbReference>
<dbReference type="PANTHER" id="PTHR33515:SF1">
    <property type="entry name" value="RIBOSOME-BINDING FACTOR A, CHLOROPLASTIC-RELATED"/>
    <property type="match status" value="1"/>
</dbReference>
<dbReference type="Pfam" id="PF02033">
    <property type="entry name" value="RBFA"/>
    <property type="match status" value="1"/>
</dbReference>
<dbReference type="SUPFAM" id="SSF89919">
    <property type="entry name" value="Ribosome-binding factor A, RbfA"/>
    <property type="match status" value="1"/>
</dbReference>
<dbReference type="PROSITE" id="PS01319">
    <property type="entry name" value="RBFA"/>
    <property type="match status" value="1"/>
</dbReference>
<organism>
    <name type="scientific">Paramagnetospirillum magneticum (strain ATCC 700264 / AMB-1)</name>
    <name type="common">Magnetospirillum magneticum</name>
    <dbReference type="NCBI Taxonomy" id="342108"/>
    <lineage>
        <taxon>Bacteria</taxon>
        <taxon>Pseudomonadati</taxon>
        <taxon>Pseudomonadota</taxon>
        <taxon>Alphaproteobacteria</taxon>
        <taxon>Rhodospirillales</taxon>
        <taxon>Magnetospirillaceae</taxon>
        <taxon>Paramagnetospirillum</taxon>
    </lineage>
</organism>
<feature type="chain" id="PRO_1000000136" description="Ribosome-binding factor A">
    <location>
        <begin position="1"/>
        <end position="142"/>
    </location>
</feature>
<feature type="region of interest" description="Disordered" evidence="2">
    <location>
        <begin position="120"/>
        <end position="142"/>
    </location>
</feature>
<feature type="compositionally biased region" description="Basic and acidic residues" evidence="2">
    <location>
        <begin position="120"/>
        <end position="130"/>
    </location>
</feature>
<feature type="compositionally biased region" description="Acidic residues" evidence="2">
    <location>
        <begin position="131"/>
        <end position="142"/>
    </location>
</feature>
<name>RBFA_PARM1</name>
<accession>Q2VZV1</accession>
<protein>
    <recommendedName>
        <fullName evidence="1">Ribosome-binding factor A</fullName>
    </recommendedName>
</protein>
<keyword id="KW-0963">Cytoplasm</keyword>
<keyword id="KW-0690">Ribosome biogenesis</keyword>
<sequence>MSRGAKPPSQRQLRVGEELRHAIAMVIERGEFRDPDLLGRAITVTEVRVSPDLRNATVFVVPLGGGDVAPILAGLKRAKAFLRHEISRMVELRAVPDLWFQEDTTFDTASRIDSILNSPEVRRDIDHAPAEDEFPTDGDDGQ</sequence>
<gene>
    <name evidence="1" type="primary">rbfA</name>
    <name type="ordered locus">amb4070</name>
</gene>